<organism>
    <name type="scientific">Streptococcus pyogenes serotype M49</name>
    <dbReference type="NCBI Taxonomy" id="301452"/>
    <lineage>
        <taxon>Bacteria</taxon>
        <taxon>Bacillati</taxon>
        <taxon>Bacillota</taxon>
        <taxon>Bacilli</taxon>
        <taxon>Lactobacillales</taxon>
        <taxon>Streptococcaceae</taxon>
        <taxon>Streptococcus</taxon>
    </lineage>
</organism>
<comment type="interaction">
    <interactant intactId="EBI-6403567">
        <id>P16946</id>
    </interactant>
    <interactant intactId="EBI-1223708">
        <id>P08603</id>
        <label>CFH</label>
    </interactant>
    <organismsDiffer>true</organismsDiffer>
    <experiments>2</experiments>
</comment>
<comment type="subcellular location">
    <subcellularLocation>
        <location evidence="1">Secreted</location>
        <location evidence="1">Cell wall</location>
        <topology evidence="1">Peptidoglycan-anchor</topology>
    </subcellularLocation>
</comment>
<comment type="similarity">
    <text evidence="5">Belongs to the M protein family.</text>
</comment>
<protein>
    <recommendedName>
        <fullName>Virulence factor-related M protein</fullName>
    </recommendedName>
</protein>
<accession>P16946</accession>
<dbReference type="EMBL" id="M23689">
    <property type="protein sequence ID" value="AAA26919.1"/>
    <property type="molecule type" value="Genomic_DNA"/>
</dbReference>
<dbReference type="EMBL" id="M31790">
    <property type="protein sequence ID" value="AAA26875.1"/>
    <property type="molecule type" value="Genomic_DNA"/>
</dbReference>
<dbReference type="PIR" id="B43715">
    <property type="entry name" value="B43715"/>
</dbReference>
<dbReference type="SMR" id="P16946"/>
<dbReference type="IntAct" id="P16946">
    <property type="interactions" value="1"/>
</dbReference>
<dbReference type="GO" id="GO:0005576">
    <property type="term" value="C:extracellular region"/>
    <property type="evidence" value="ECO:0007669"/>
    <property type="project" value="UniProtKB-KW"/>
</dbReference>
<dbReference type="GO" id="GO:0006909">
    <property type="term" value="P:phagocytosis"/>
    <property type="evidence" value="ECO:0007669"/>
    <property type="project" value="UniProtKB-KW"/>
</dbReference>
<dbReference type="Gene3D" id="6.10.250.460">
    <property type="match status" value="3"/>
</dbReference>
<dbReference type="InterPro" id="IPR019931">
    <property type="entry name" value="LPXTG_anchor"/>
</dbReference>
<dbReference type="InterPro" id="IPR019950">
    <property type="entry name" value="M_anchor"/>
</dbReference>
<dbReference type="InterPro" id="IPR003345">
    <property type="entry name" value="M_repeat"/>
</dbReference>
<dbReference type="InterPro" id="IPR049896">
    <property type="entry name" value="SMCR"/>
</dbReference>
<dbReference type="InterPro" id="IPR049895">
    <property type="entry name" value="SMDRR"/>
</dbReference>
<dbReference type="InterPro" id="IPR005877">
    <property type="entry name" value="YSIRK_signal_dom"/>
</dbReference>
<dbReference type="NCBIfam" id="TIGR01167">
    <property type="entry name" value="LPXTG_anchor"/>
    <property type="match status" value="1"/>
</dbReference>
<dbReference type="NCBIfam" id="TIGR01168">
    <property type="entry name" value="YSIRK_signal"/>
    <property type="match status" value="1"/>
</dbReference>
<dbReference type="Pfam" id="PF00746">
    <property type="entry name" value="Gram_pos_anchor"/>
    <property type="match status" value="1"/>
</dbReference>
<dbReference type="Pfam" id="PF02370">
    <property type="entry name" value="M"/>
    <property type="match status" value="2"/>
</dbReference>
<dbReference type="Pfam" id="PF04650">
    <property type="entry name" value="YSIRK_signal"/>
    <property type="match status" value="1"/>
</dbReference>
<dbReference type="PRINTS" id="PR00015">
    <property type="entry name" value="GPOSANCHOR"/>
</dbReference>
<dbReference type="PROSITE" id="PS50847">
    <property type="entry name" value="GRAM_POS_ANCHORING"/>
    <property type="match status" value="1"/>
</dbReference>
<dbReference type="PROSITE" id="PS52028">
    <property type="entry name" value="SMCR"/>
    <property type="match status" value="3"/>
</dbReference>
<dbReference type="PROSITE" id="PS52030">
    <property type="entry name" value="SMDRR"/>
    <property type="match status" value="1"/>
</dbReference>
<reference key="1">
    <citation type="journal article" date="1989" name="J. Bacteriol.">
        <title>Identification of a divergent M protein gene and an M protein-related gene family in Streptococcus pyogenes serotype 49.</title>
        <authorList>
            <person name="Haanes E.J."/>
            <person name="Cleary P.P."/>
        </authorList>
    </citation>
    <scope>NUCLEOTIDE SEQUENCE [GENOMIC DNA]</scope>
</reference>
<evidence type="ECO:0000255" key="1">
    <source>
        <dbReference type="PROSITE-ProRule" id="PRU00477"/>
    </source>
</evidence>
<evidence type="ECO:0000255" key="2">
    <source>
        <dbReference type="PROSITE-ProRule" id="PRU01372"/>
    </source>
</evidence>
<evidence type="ECO:0000255" key="3">
    <source>
        <dbReference type="PROSITE-ProRule" id="PRU01374"/>
    </source>
</evidence>
<evidence type="ECO:0000256" key="4">
    <source>
        <dbReference type="SAM" id="MobiDB-lite"/>
    </source>
</evidence>
<evidence type="ECO:0000305" key="5"/>
<gene>
    <name type="primary">ennX</name>
</gene>
<proteinExistence type="evidence at protein level"/>
<keyword id="KW-0134">Cell wall</keyword>
<keyword id="KW-0175">Coiled coil</keyword>
<keyword id="KW-0572">Peptidoglycan-anchor</keyword>
<keyword id="KW-0581">Phagocytosis</keyword>
<keyword id="KW-0677">Repeat</keyword>
<keyword id="KW-0964">Secreted</keyword>
<keyword id="KW-0732">Signal</keyword>
<keyword id="KW-0843">Virulence</keyword>
<sequence length="369" mass="40639">MARQQTKKNYSLRKLKTGTASVAVALTVLGAGFANQTEVRAEGVNATTSLTEKAKYDALKDENTGLRGDQTKLVKKLEEEQEKSKNLEKEKQKLENQALNFQDVIETQEKEKEDLKTTLAKATKENEISEASRKGLSRDLEASRAAKKELEAKHQKLEAENKKLTEANQVSEASRKGLSNDLEASRAAKKELEAKYQKLETDHQALEAKHQKLEADLPKFQRPSRKGLSRDLEASREANKKVTSELTQAKAQLSALEESKKLSEKEKAELQAKLDAQGKALKEQLAKQTEELAKLRAEKAAGSKTPATKPANKERSGRAAQTATRPSQNKGMRSQLPSTGEAANPFFTAAAATVMVSAGMLALKRKEEN</sequence>
<feature type="signal peptide">
    <location>
        <begin position="1"/>
        <end position="41"/>
    </location>
</feature>
<feature type="chain" id="PRO_0000005627" description="Virulence factor-related M protein">
    <location>
        <begin position="42"/>
        <end position="339"/>
    </location>
</feature>
<feature type="propeptide" id="PRO_0000005628" description="Removed by sortase" evidence="1">
    <location>
        <begin position="340"/>
        <end position="369"/>
    </location>
</feature>
<feature type="repeat" description="C 1" evidence="2">
    <location>
        <begin position="120"/>
        <end position="154"/>
    </location>
</feature>
<feature type="repeat" description="C 2" evidence="2">
    <location>
        <begin position="162"/>
        <end position="196"/>
    </location>
</feature>
<feature type="repeat" description="C 3" evidence="2">
    <location>
        <begin position="211"/>
        <end position="246"/>
    </location>
</feature>
<feature type="repeat" description="D 1" evidence="3">
    <location>
        <begin position="272"/>
        <end position="277"/>
    </location>
</feature>
<feature type="repeat" description="D 2" evidence="3">
    <location>
        <begin position="278"/>
        <end position="283"/>
    </location>
</feature>
<feature type="repeat" description="D 3" evidence="3">
    <location>
        <begin position="286"/>
        <end position="291"/>
    </location>
</feature>
<feature type="repeat" description="D 4" evidence="3">
    <location>
        <begin position="293"/>
        <end position="298"/>
    </location>
</feature>
<feature type="region of interest" description="Disordered" evidence="4">
    <location>
        <begin position="125"/>
        <end position="189"/>
    </location>
</feature>
<feature type="region of interest" description="2 X repeats, type A">
    <location>
        <begin position="129"/>
        <end position="200"/>
    </location>
</feature>
<feature type="region of interest" description="3 X repeats, type B">
    <location>
        <begin position="132"/>
        <end position="241"/>
    </location>
</feature>
<feature type="region of interest" description="Disordered" evidence="4">
    <location>
        <begin position="202"/>
        <end position="271"/>
    </location>
</feature>
<feature type="region of interest" description="Disordered" evidence="4">
    <location>
        <begin position="292"/>
        <end position="341"/>
    </location>
</feature>
<feature type="short sequence motif" description="LPXTG sorting signal" evidence="1">
    <location>
        <begin position="336"/>
        <end position="340"/>
    </location>
</feature>
<feature type="compositionally biased region" description="Basic and acidic residues" evidence="4">
    <location>
        <begin position="125"/>
        <end position="165"/>
    </location>
</feature>
<feature type="compositionally biased region" description="Basic and acidic residues" evidence="4">
    <location>
        <begin position="202"/>
        <end position="219"/>
    </location>
</feature>
<feature type="compositionally biased region" description="Basic and acidic residues" evidence="4">
    <location>
        <begin position="228"/>
        <end position="243"/>
    </location>
</feature>
<feature type="compositionally biased region" description="Basic and acidic residues" evidence="4">
    <location>
        <begin position="257"/>
        <end position="271"/>
    </location>
</feature>
<feature type="compositionally biased region" description="Basic and acidic residues" evidence="4">
    <location>
        <begin position="292"/>
        <end position="301"/>
    </location>
</feature>
<feature type="compositionally biased region" description="Polar residues" evidence="4">
    <location>
        <begin position="319"/>
        <end position="338"/>
    </location>
</feature>
<feature type="modified residue" description="Pentaglycyl murein peptidoglycan amidated threonine" evidence="1">
    <location>
        <position position="339"/>
    </location>
</feature>
<name>MX_STRP9</name>